<sequence>MWDMRAVAPQRPAAGHPRAGWPRKLKTAATRFWATCPSSSTVCFLFVIFAVSTVFHCHRRLALVPAPWAYAGHVVLFPRHLPRGGVFTINAKGRLGNQMGEYATLYALAKMNGRAAFIPPQMHSTLAPIFRITLPVLHDATARSVPWQNYHLNDWMEEQYRHIPGEYVRLTGYPCSWTFYHHLRAEILQEFTLHAHVREEAQNFLRGLRVNGSRPSTYVGVHVRRGDYVRVMPTMWKGVLADRGYLQQALDWFRARHHSPLFVITSDDMAWCRRNINSSHRDVVFAGSGQQGSPARDFALLTQCNHTVITVGTFGIWAAYLAGGSTVYLANFTLPGSRFRMIFKPQAAFLPEWVGIAANLGQARESHP</sequence>
<gene>
    <name evidence="5" type="primary">SEC1</name>
</gene>
<evidence type="ECO:0000250" key="1">
    <source>
        <dbReference type="UniProtKB" id="O09160"/>
    </source>
</evidence>
<evidence type="ECO:0000255" key="2"/>
<evidence type="ECO:0000256" key="3">
    <source>
        <dbReference type="SAM" id="MobiDB-lite"/>
    </source>
</evidence>
<evidence type="ECO:0000269" key="4">
    <source>
    </source>
</evidence>
<evidence type="ECO:0000303" key="5">
    <source>
    </source>
</evidence>
<evidence type="ECO:0000305" key="6"/>
<evidence type="ECO:0000305" key="7">
    <source>
    </source>
</evidence>
<protein>
    <recommendedName>
        <fullName>Galactoside 2-alpha-L-fucosyltransferase SEC1</fullName>
        <ecNumber>2.4.1.-</ecNumber>
    </recommendedName>
    <alternativeName>
        <fullName evidence="5">Secretory blood group protein 1</fullName>
    </alternativeName>
</protein>
<organism>
    <name type="scientific">Bos taurus</name>
    <name type="common">Bovine</name>
    <dbReference type="NCBI Taxonomy" id="9913"/>
    <lineage>
        <taxon>Eukaryota</taxon>
        <taxon>Metazoa</taxon>
        <taxon>Chordata</taxon>
        <taxon>Craniata</taxon>
        <taxon>Vertebrata</taxon>
        <taxon>Euteleostomi</taxon>
        <taxon>Mammalia</taxon>
        <taxon>Eutheria</taxon>
        <taxon>Laurasiatheria</taxon>
        <taxon>Artiodactyla</taxon>
        <taxon>Ruminantia</taxon>
        <taxon>Pecora</taxon>
        <taxon>Bovidae</taxon>
        <taxon>Bovinae</taxon>
        <taxon>Bos</taxon>
    </lineage>
</organism>
<dbReference type="EC" id="2.4.1.-"/>
<dbReference type="EMBL" id="AF187851">
    <property type="protein sequence ID" value="AAF03411.1"/>
    <property type="molecule type" value="Genomic_DNA"/>
</dbReference>
<dbReference type="EMBL" id="AH011100">
    <property type="protein sequence ID" value="AAL06322.1"/>
    <property type="molecule type" value="mRNA"/>
</dbReference>
<dbReference type="SMR" id="Q9TTY3"/>
<dbReference type="SwissLipids" id="SLP:000001423"/>
<dbReference type="CAZy" id="GT11">
    <property type="family name" value="Glycosyltransferase Family 11"/>
</dbReference>
<dbReference type="InParanoid" id="Q9TTY3"/>
<dbReference type="UniPathway" id="UPA00378"/>
<dbReference type="Proteomes" id="UP000009136">
    <property type="component" value="Unplaced"/>
</dbReference>
<dbReference type="GO" id="GO:0032580">
    <property type="term" value="C:Golgi cisterna membrane"/>
    <property type="evidence" value="ECO:0007669"/>
    <property type="project" value="UniProtKB-SubCell"/>
</dbReference>
<dbReference type="GO" id="GO:0031127">
    <property type="term" value="F:alpha-(1,2)-fucosyltransferase activity"/>
    <property type="evidence" value="ECO:0000314"/>
    <property type="project" value="UniProtKB"/>
</dbReference>
<dbReference type="GO" id="GO:0008107">
    <property type="term" value="F:galactoside 2-alpha-L-fucosyltransferase activity"/>
    <property type="evidence" value="ECO:0000318"/>
    <property type="project" value="GO_Central"/>
</dbReference>
<dbReference type="GO" id="GO:0005975">
    <property type="term" value="P:carbohydrate metabolic process"/>
    <property type="evidence" value="ECO:0007669"/>
    <property type="project" value="InterPro"/>
</dbReference>
<dbReference type="GO" id="GO:0036065">
    <property type="term" value="P:fucosylation"/>
    <property type="evidence" value="ECO:0000318"/>
    <property type="project" value="GO_Central"/>
</dbReference>
<dbReference type="GO" id="GO:0006486">
    <property type="term" value="P:protein glycosylation"/>
    <property type="evidence" value="ECO:0000318"/>
    <property type="project" value="GO_Central"/>
</dbReference>
<dbReference type="CDD" id="cd11301">
    <property type="entry name" value="Fut1_Fut2_like"/>
    <property type="match status" value="1"/>
</dbReference>
<dbReference type="InterPro" id="IPR002516">
    <property type="entry name" value="Glyco_trans_11"/>
</dbReference>
<dbReference type="PANTHER" id="PTHR11927:SF8">
    <property type="entry name" value="GALACTOSIDE 2-ALPHA-L-FUCOSYLTRANSFERASE SEC1"/>
    <property type="match status" value="1"/>
</dbReference>
<dbReference type="PANTHER" id="PTHR11927">
    <property type="entry name" value="GALACTOSIDE 2-L-FUCOSYLTRANSFERASE"/>
    <property type="match status" value="1"/>
</dbReference>
<dbReference type="Pfam" id="PF01531">
    <property type="entry name" value="Glyco_transf_11"/>
    <property type="match status" value="1"/>
</dbReference>
<keyword id="KW-0328">Glycosyltransferase</keyword>
<keyword id="KW-0333">Golgi apparatus</keyword>
<keyword id="KW-0472">Membrane</keyword>
<keyword id="KW-1185">Reference proteome</keyword>
<keyword id="KW-0735">Signal-anchor</keyword>
<keyword id="KW-0808">Transferase</keyword>
<keyword id="KW-0812">Transmembrane</keyword>
<keyword id="KW-1133">Transmembrane helix</keyword>
<comment type="function">
    <text evidence="4">Catalyzes the transfer of alpha 1,2-linked fucose to ganglioside GM1 and galacto-N-biose.</text>
</comment>
<comment type="catalytic activity">
    <reaction evidence="4">
        <text>a ganglioside GM1 + GDP-beta-L-fucose = a ganglioside Fuc-GM1 + GDP + H(+)</text>
        <dbReference type="Rhea" id="RHEA:48292"/>
        <dbReference type="ChEBI" id="CHEBI:15378"/>
        <dbReference type="ChEBI" id="CHEBI:57273"/>
        <dbReference type="ChEBI" id="CHEBI:58189"/>
        <dbReference type="ChEBI" id="CHEBI:82639"/>
        <dbReference type="ChEBI" id="CHEBI:90189"/>
    </reaction>
    <physiologicalReaction direction="left-to-right" evidence="7">
        <dbReference type="Rhea" id="RHEA:48293"/>
    </physiologicalReaction>
</comment>
<comment type="biophysicochemical properties">
    <kinetics>
        <KM evidence="4">0.6 uM for Galacto-N-biose</KM>
        <KM evidence="4">1.81 uM for ganglioside GM1</KM>
        <Vmax evidence="4">28.2 pmol/min/mg enzyme towards Galacto-N-biose</Vmax>
        <Vmax evidence="4">37.9 pmol/min/mg enzyme towards ganglioside GM1</Vmax>
    </kinetics>
</comment>
<comment type="pathway">
    <text>Protein modification; protein glycosylation.</text>
</comment>
<comment type="subcellular location">
    <subcellularLocation>
        <location evidence="1">Golgi apparatus</location>
        <location evidence="1">Golgi stack membrane</location>
        <topology evidence="1">Single-pass type II membrane protein</topology>
    </subcellularLocation>
    <text evidence="1">Membrane-bound form in trans cisternae of Golgi.</text>
</comment>
<comment type="tissue specificity">
    <text evidence="4">Kidney.</text>
</comment>
<comment type="similarity">
    <text evidence="6">Belongs to the glycosyltransferase 11 family.</text>
</comment>
<feature type="chain" id="PRO_0000451808" description="Galactoside 2-alpha-L-fucosyltransferase SEC1">
    <location>
        <begin position="1"/>
        <end position="368"/>
    </location>
</feature>
<feature type="topological domain" description="Cytoplasmic" evidence="6">
    <location>
        <begin position="1"/>
        <end position="31"/>
    </location>
</feature>
<feature type="transmembrane region" description="Helical" evidence="2">
    <location>
        <begin position="32"/>
        <end position="52"/>
    </location>
</feature>
<feature type="topological domain" description="Lumenal" evidence="6">
    <location>
        <begin position="53"/>
        <end position="368"/>
    </location>
</feature>
<feature type="region of interest" description="Disordered" evidence="3">
    <location>
        <begin position="1"/>
        <end position="20"/>
    </location>
</feature>
<proteinExistence type="evidence at protein level"/>
<reference key="1">
    <citation type="journal article" date="2000" name="Glycobiology">
        <title>Three bovine alpha2-fucosyltransferase genes encode enzymes that preferentially transfer fucose on Galbeta1-3GalNAc acceptor substrates.</title>
        <authorList>
            <person name="Barreaud J.P."/>
            <person name="Saunier K."/>
            <person name="Souchaire J."/>
            <person name="Delourme D."/>
            <person name="Oulmouden A."/>
            <person name="Oriol R."/>
            <person name="Leveziel H."/>
            <person name="Julien R."/>
            <person name="Petit J.M."/>
        </authorList>
    </citation>
    <scope>NUCLEOTIDE SEQUENCE [GENOMIC DNA]</scope>
    <scope>FUNCTION</scope>
    <scope>CATALYTIC ACTIVITY</scope>
    <scope>TISSUE SPECIFICITY</scope>
    <scope>BIOPHYSICOCHEMICAL PROPERTIES</scope>
</reference>
<reference key="2">
    <citation type="journal article" date="2001" name="Mol. Biol. Evol.">
        <title>Organization of the bovine alpha 2-fucosyltransferase gene cluster suggests that the Sec1 gene might have been shaped through a nonautonomous L1-retrotransposition event within the same locus.</title>
        <authorList>
            <person name="Saunier K."/>
            <person name="Barreaud J.P."/>
            <person name="Eggen A."/>
            <person name="Oriol R."/>
            <person name="Leveziel H."/>
            <person name="Julien R."/>
            <person name="Petit J.-M."/>
        </authorList>
    </citation>
    <scope>NUCLEOTIDE SEQUENCE [MRNA]</scope>
</reference>
<name>SEC1_BOVIN</name>
<accession>Q9TTY3</accession>